<sequence length="133" mass="15096">MVFVNPLANALTSIYNNEMRRNKQAIIMPASKLVINVLRVMQKEGYVGEFEYIDDGRWGKITVQLLGRVNKCGPITPRYPLSYRQMIALPDYIRRYLPSKEIGIIIVSTSKGVMSHKEAARMRLGGVALGYVY</sequence>
<protein>
    <recommendedName>
        <fullName evidence="1">Small ribosomal subunit protein uS8</fullName>
    </recommendedName>
    <alternativeName>
        <fullName evidence="2">30S ribosomal protein S8</fullName>
    </alternativeName>
</protein>
<keyword id="KW-0687">Ribonucleoprotein</keyword>
<keyword id="KW-0689">Ribosomal protein</keyword>
<keyword id="KW-0694">RNA-binding</keyword>
<keyword id="KW-0699">rRNA-binding</keyword>
<feature type="chain" id="PRO_1000214271" description="Small ribosomal subunit protein uS8">
    <location>
        <begin position="1"/>
        <end position="133"/>
    </location>
</feature>
<reference key="1">
    <citation type="journal article" date="2009" name="Proc. Natl. Acad. Sci. U.S.A.">
        <title>Biogeography of the Sulfolobus islandicus pan-genome.</title>
        <authorList>
            <person name="Reno M.L."/>
            <person name="Held N.L."/>
            <person name="Fields C.J."/>
            <person name="Burke P.V."/>
            <person name="Whitaker R.J."/>
        </authorList>
    </citation>
    <scope>NUCLEOTIDE SEQUENCE [LARGE SCALE GENOMIC DNA]</scope>
    <source>
        <strain>Y.G.57.14 / Yellowstone #1</strain>
    </source>
</reference>
<name>RS8_SACI7</name>
<evidence type="ECO:0000255" key="1">
    <source>
        <dbReference type="HAMAP-Rule" id="MF_01302"/>
    </source>
</evidence>
<evidence type="ECO:0000305" key="2"/>
<gene>
    <name evidence="1" type="primary">rps8</name>
    <name type="ordered locus">YG5714_1430</name>
</gene>
<organism>
    <name type="scientific">Saccharolobus islandicus (strain Y.G.57.14 / Yellowstone #1)</name>
    <name type="common">Sulfolobus islandicus</name>
    <dbReference type="NCBI Taxonomy" id="439386"/>
    <lineage>
        <taxon>Archaea</taxon>
        <taxon>Thermoproteota</taxon>
        <taxon>Thermoprotei</taxon>
        <taxon>Sulfolobales</taxon>
        <taxon>Sulfolobaceae</taxon>
        <taxon>Saccharolobus</taxon>
    </lineage>
</organism>
<dbReference type="EMBL" id="CP001403">
    <property type="protein sequence ID" value="ACP45697.1"/>
    <property type="molecule type" value="Genomic_DNA"/>
</dbReference>
<dbReference type="RefSeq" id="WP_012711433.1">
    <property type="nucleotide sequence ID" value="NC_012622.1"/>
</dbReference>
<dbReference type="SMR" id="C3NEF8"/>
<dbReference type="KEGG" id="siy:YG5714_1430"/>
<dbReference type="HOGENOM" id="CLU_098428_1_1_2"/>
<dbReference type="Proteomes" id="UP000002308">
    <property type="component" value="Chromosome"/>
</dbReference>
<dbReference type="GO" id="GO:1990904">
    <property type="term" value="C:ribonucleoprotein complex"/>
    <property type="evidence" value="ECO:0007669"/>
    <property type="project" value="UniProtKB-KW"/>
</dbReference>
<dbReference type="GO" id="GO:0005840">
    <property type="term" value="C:ribosome"/>
    <property type="evidence" value="ECO:0007669"/>
    <property type="project" value="UniProtKB-KW"/>
</dbReference>
<dbReference type="GO" id="GO:0019843">
    <property type="term" value="F:rRNA binding"/>
    <property type="evidence" value="ECO:0007669"/>
    <property type="project" value="UniProtKB-UniRule"/>
</dbReference>
<dbReference type="GO" id="GO:0003735">
    <property type="term" value="F:structural constituent of ribosome"/>
    <property type="evidence" value="ECO:0007669"/>
    <property type="project" value="InterPro"/>
</dbReference>
<dbReference type="GO" id="GO:0006412">
    <property type="term" value="P:translation"/>
    <property type="evidence" value="ECO:0007669"/>
    <property type="project" value="UniProtKB-UniRule"/>
</dbReference>
<dbReference type="FunFam" id="3.30.1370.30:FF:000001">
    <property type="entry name" value="40S ribosomal protein S15a"/>
    <property type="match status" value="1"/>
</dbReference>
<dbReference type="Gene3D" id="3.30.1370.30">
    <property type="match status" value="1"/>
</dbReference>
<dbReference type="Gene3D" id="3.30.1490.10">
    <property type="match status" value="1"/>
</dbReference>
<dbReference type="HAMAP" id="MF_01302_A">
    <property type="entry name" value="Ribosomal_uS8_A"/>
    <property type="match status" value="1"/>
</dbReference>
<dbReference type="InterPro" id="IPR000630">
    <property type="entry name" value="Ribosomal_uS8"/>
</dbReference>
<dbReference type="InterPro" id="IPR047863">
    <property type="entry name" value="Ribosomal_uS8_CS"/>
</dbReference>
<dbReference type="InterPro" id="IPR035987">
    <property type="entry name" value="Ribosomal_uS8_sf"/>
</dbReference>
<dbReference type="NCBIfam" id="NF003115">
    <property type="entry name" value="PRK04034.1"/>
    <property type="match status" value="1"/>
</dbReference>
<dbReference type="PANTHER" id="PTHR11758">
    <property type="entry name" value="40S RIBOSOMAL PROTEIN S15A"/>
    <property type="match status" value="1"/>
</dbReference>
<dbReference type="Pfam" id="PF00410">
    <property type="entry name" value="Ribosomal_S8"/>
    <property type="match status" value="1"/>
</dbReference>
<dbReference type="SUPFAM" id="SSF56047">
    <property type="entry name" value="Ribosomal protein S8"/>
    <property type="match status" value="1"/>
</dbReference>
<dbReference type="PROSITE" id="PS00053">
    <property type="entry name" value="RIBOSOMAL_S8"/>
    <property type="match status" value="1"/>
</dbReference>
<accession>C3NEF8</accession>
<comment type="function">
    <text evidence="1">One of the primary rRNA binding proteins, it binds directly to 16S rRNA central domain where it helps coordinate assembly of the platform of the 30S subunit.</text>
</comment>
<comment type="subunit">
    <text evidence="1">Part of the 30S ribosomal subunit.</text>
</comment>
<comment type="similarity">
    <text evidence="1">Belongs to the universal ribosomal protein uS8 family.</text>
</comment>
<proteinExistence type="inferred from homology"/>